<proteinExistence type="evidence at protein level"/>
<keyword id="KW-0119">Carbohydrate metabolism</keyword>
<keyword id="KW-0903">Direct protein sequencing</keyword>
<keyword id="KW-1015">Disulfide bond</keyword>
<keyword id="KW-0313">Glucose metabolism</keyword>
<keyword id="KW-0372">Hormone</keyword>
<keyword id="KW-1185">Reference proteome</keyword>
<keyword id="KW-0964">Secreted</keyword>
<accession>P01310</accession>
<reference key="1">
    <citation type="journal article" date="1956" name="Arch. Biochem. Biophys.">
        <title>Species differences in insulin.</title>
        <authorList>
            <person name="Harris J.I."/>
            <person name="Sanger F."/>
            <person name="Naughton M.A."/>
        </authorList>
    </citation>
    <scope>PROTEIN SEQUENCE OF 1-30 AND 66-86</scope>
</reference>
<reference key="2">
    <citation type="journal article" date="1972" name="J. Biol. Chem.">
        <title>Primary structures of the proinsulin connecting peptides of the rat and the horse.</title>
        <authorList>
            <person name="Tager H.S."/>
            <person name="Steiner D.F."/>
        </authorList>
    </citation>
    <scope>PROTEIN SEQUENCE OF 33-63</scope>
</reference>
<protein>
    <recommendedName>
        <fullName>Insulin</fullName>
    </recommendedName>
    <component>
        <recommendedName>
            <fullName>Insulin B chain</fullName>
        </recommendedName>
    </component>
    <component>
        <recommendedName>
            <fullName>Insulin A chain</fullName>
        </recommendedName>
    </component>
</protein>
<organism>
    <name type="scientific">Equus caballus</name>
    <name type="common">Horse</name>
    <dbReference type="NCBI Taxonomy" id="9796"/>
    <lineage>
        <taxon>Eukaryota</taxon>
        <taxon>Metazoa</taxon>
        <taxon>Chordata</taxon>
        <taxon>Craniata</taxon>
        <taxon>Vertebrata</taxon>
        <taxon>Euteleostomi</taxon>
        <taxon>Mammalia</taxon>
        <taxon>Eutheria</taxon>
        <taxon>Laurasiatheria</taxon>
        <taxon>Perissodactyla</taxon>
        <taxon>Equidae</taxon>
        <taxon>Equus</taxon>
    </lineage>
</organism>
<dbReference type="PIR" id="A01580">
    <property type="entry name" value="IPHO"/>
</dbReference>
<dbReference type="BMRB" id="P01310"/>
<dbReference type="STRING" id="9796.ENSECAP00000022114"/>
<dbReference type="PaxDb" id="9796-ENSECAP00000022114"/>
<dbReference type="InParanoid" id="P01310"/>
<dbReference type="Proteomes" id="UP000002281">
    <property type="component" value="Unplaced"/>
</dbReference>
<dbReference type="GO" id="GO:0005615">
    <property type="term" value="C:extracellular space"/>
    <property type="evidence" value="ECO:0000318"/>
    <property type="project" value="GO_Central"/>
</dbReference>
<dbReference type="GO" id="GO:0005179">
    <property type="term" value="F:hormone activity"/>
    <property type="evidence" value="ECO:0007669"/>
    <property type="project" value="UniProtKB-KW"/>
</dbReference>
<dbReference type="GO" id="GO:1901701">
    <property type="term" value="P:cellular response to oxygen-containing compound"/>
    <property type="evidence" value="ECO:0007669"/>
    <property type="project" value="UniProtKB-ARBA"/>
</dbReference>
<dbReference type="GO" id="GO:0042593">
    <property type="term" value="P:glucose homeostasis"/>
    <property type="evidence" value="ECO:0000318"/>
    <property type="project" value="GO_Central"/>
</dbReference>
<dbReference type="GO" id="GO:0006006">
    <property type="term" value="P:glucose metabolic process"/>
    <property type="evidence" value="ECO:0007669"/>
    <property type="project" value="UniProtKB-KW"/>
</dbReference>
<dbReference type="GO" id="GO:0050714">
    <property type="term" value="P:positive regulation of protein secretion"/>
    <property type="evidence" value="ECO:0000318"/>
    <property type="project" value="GO_Central"/>
</dbReference>
<dbReference type="CDD" id="cd04367">
    <property type="entry name" value="IlGF_insulin_like"/>
    <property type="match status" value="1"/>
</dbReference>
<dbReference type="FunFam" id="1.10.100.10:FF:000003">
    <property type="entry name" value="Insulin"/>
    <property type="match status" value="1"/>
</dbReference>
<dbReference type="Gene3D" id="1.10.100.10">
    <property type="entry name" value="Insulin-like"/>
    <property type="match status" value="1"/>
</dbReference>
<dbReference type="InterPro" id="IPR004825">
    <property type="entry name" value="Insulin"/>
</dbReference>
<dbReference type="InterPro" id="IPR016179">
    <property type="entry name" value="Insulin-like"/>
</dbReference>
<dbReference type="InterPro" id="IPR036438">
    <property type="entry name" value="Insulin-like_sf"/>
</dbReference>
<dbReference type="InterPro" id="IPR022353">
    <property type="entry name" value="Insulin_CS"/>
</dbReference>
<dbReference type="InterPro" id="IPR022352">
    <property type="entry name" value="Insulin_family"/>
</dbReference>
<dbReference type="PANTHER" id="PTHR11454:SF9">
    <property type="entry name" value="INSULIN"/>
    <property type="match status" value="1"/>
</dbReference>
<dbReference type="PANTHER" id="PTHR11454">
    <property type="entry name" value="INSULIN/INSULIN GROWTH FACTOR"/>
    <property type="match status" value="1"/>
</dbReference>
<dbReference type="Pfam" id="PF00049">
    <property type="entry name" value="Insulin"/>
    <property type="match status" value="1"/>
</dbReference>
<dbReference type="PRINTS" id="PR00277">
    <property type="entry name" value="INSULIN"/>
</dbReference>
<dbReference type="PRINTS" id="PR00276">
    <property type="entry name" value="INSULINFAMLY"/>
</dbReference>
<dbReference type="SMART" id="SM00078">
    <property type="entry name" value="IlGF"/>
    <property type="match status" value="1"/>
</dbReference>
<dbReference type="SUPFAM" id="SSF56994">
    <property type="entry name" value="Insulin-like"/>
    <property type="match status" value="1"/>
</dbReference>
<dbReference type="PROSITE" id="PS00262">
    <property type="entry name" value="INSULIN"/>
    <property type="match status" value="1"/>
</dbReference>
<feature type="peptide" id="PRO_0000015816" description="Insulin B chain">
    <location>
        <begin position="1"/>
        <end position="30"/>
    </location>
</feature>
<feature type="propeptide" id="PRO_0000015817" description="C peptide">
    <location>
        <begin position="33"/>
        <end position="63"/>
    </location>
</feature>
<feature type="peptide" id="PRO_0000015818" description="Insulin A chain">
    <location>
        <begin position="66"/>
        <end position="86"/>
    </location>
</feature>
<feature type="disulfide bond" description="Interchain (between B and A chains)" evidence="1">
    <location>
        <begin position="7"/>
        <end position="72"/>
    </location>
</feature>
<feature type="disulfide bond" description="Interchain (between B and A chains)" evidence="1">
    <location>
        <begin position="19"/>
        <end position="85"/>
    </location>
</feature>
<feature type="disulfide bond" evidence="1">
    <location>
        <begin position="71"/>
        <end position="76"/>
    </location>
</feature>
<sequence length="86" mass="9147">FVNQHLCGSHLVEALYLVCGERGFFYTPKAXXEAEDPQVGEVELGGGPGLGGLQPLALAGPQQXXGIVEQCCTGICSLYQLENYCN</sequence>
<evidence type="ECO:0000250" key="1">
    <source>
        <dbReference type="UniProtKB" id="P01308"/>
    </source>
</evidence>
<evidence type="ECO:0000305" key="2"/>
<name>INS_HORSE</name>
<comment type="function">
    <text>Insulin decreases blood glucose concentration. It increases cell permeability to monosaccharides, amino acids and fatty acids. It accelerates glycolysis, the pentose phosphate cycle, and glycogen synthesis in liver.</text>
</comment>
<comment type="subunit">
    <text evidence="1">Heterodimer of a B chain and an A chain linked by two disulfide bonds.</text>
</comment>
<comment type="subcellular location">
    <subcellularLocation>
        <location>Secreted</location>
    </subcellularLocation>
</comment>
<comment type="similarity">
    <text evidence="2">Belongs to the insulin family.</text>
</comment>
<comment type="caution">
    <text evidence="2">X's at positions 31-32 and 64-65 represent paired basic residues assumed by homology to be present in the precursor molecule.</text>
</comment>
<gene>
    <name type="primary">INS</name>
</gene>